<dbReference type="EMBL" id="BX284603">
    <property type="protein sequence ID" value="CCD71238.1"/>
    <property type="molecule type" value="Genomic_DNA"/>
</dbReference>
<dbReference type="PIR" id="S44830">
    <property type="entry name" value="S44830"/>
</dbReference>
<dbReference type="BioGRID" id="41438">
    <property type="interactions" value="8"/>
</dbReference>
<dbReference type="FunCoup" id="P34450">
    <property type="interactions" value="1751"/>
</dbReference>
<dbReference type="IntAct" id="P34450">
    <property type="interactions" value="5"/>
</dbReference>
<dbReference type="STRING" id="6239.F54F2.5a.1"/>
<dbReference type="PaxDb" id="6239-F54F2.5a"/>
<dbReference type="EnsemblMetazoa" id="F54F2.5.1">
    <property type="protein sequence ID" value="F54F2.5.1"/>
    <property type="gene ID" value="WBGene00018833"/>
</dbReference>
<dbReference type="KEGG" id="cel:CELE_F54F2.5"/>
<dbReference type="UCSC" id="F54F2.5a">
    <property type="organism name" value="c. elegans"/>
</dbReference>
<dbReference type="AGR" id="WB:WBGene00018833"/>
<dbReference type="CTD" id="176236"/>
<dbReference type="WormBase" id="F54F2.5">
    <property type="protein sequence ID" value="CE25004"/>
    <property type="gene ID" value="WBGene00018833"/>
    <property type="gene designation" value="hrpc-1"/>
</dbReference>
<dbReference type="eggNOG" id="KOG1721">
    <property type="taxonomic scope" value="Eukaryota"/>
</dbReference>
<dbReference type="HOGENOM" id="CLU_479170_0_0_1"/>
<dbReference type="InParanoid" id="P34450"/>
<dbReference type="OMA" id="RPYKTHA"/>
<dbReference type="OrthoDB" id="5814109at2759"/>
<dbReference type="SignaLink" id="P34450"/>
<dbReference type="PRO" id="PR:P34450"/>
<dbReference type="Proteomes" id="UP000001940">
    <property type="component" value="Chromosome III"/>
</dbReference>
<dbReference type="Bgee" id="WBGene00018833">
    <property type="expression patterns" value="Expressed in germ line (C elegans) and 4 other cell types or tissues"/>
</dbReference>
<dbReference type="GO" id="GO:0005634">
    <property type="term" value="C:nucleus"/>
    <property type="evidence" value="ECO:0000318"/>
    <property type="project" value="GO_Central"/>
</dbReference>
<dbReference type="GO" id="GO:0000981">
    <property type="term" value="F:DNA-binding transcription factor activity, RNA polymerase II-specific"/>
    <property type="evidence" value="ECO:0000318"/>
    <property type="project" value="GO_Central"/>
</dbReference>
<dbReference type="GO" id="GO:0043565">
    <property type="term" value="F:sequence-specific DNA binding"/>
    <property type="evidence" value="ECO:0000318"/>
    <property type="project" value="GO_Central"/>
</dbReference>
<dbReference type="GO" id="GO:0008270">
    <property type="term" value="F:zinc ion binding"/>
    <property type="evidence" value="ECO:0007669"/>
    <property type="project" value="UniProtKB-KW"/>
</dbReference>
<dbReference type="GO" id="GO:0006357">
    <property type="term" value="P:regulation of transcription by RNA polymerase II"/>
    <property type="evidence" value="ECO:0000318"/>
    <property type="project" value="GO_Central"/>
</dbReference>
<dbReference type="InterPro" id="IPR050527">
    <property type="entry name" value="Snail/Krueppel_Znf"/>
</dbReference>
<dbReference type="InterPro" id="IPR013087">
    <property type="entry name" value="Znf_C2H2_type"/>
</dbReference>
<dbReference type="PANTHER" id="PTHR24388:SF104">
    <property type="entry name" value="AT-RICH BINDING PROTEIN-RELATED"/>
    <property type="match status" value="1"/>
</dbReference>
<dbReference type="PANTHER" id="PTHR24388">
    <property type="entry name" value="ZINC FINGER PROTEIN"/>
    <property type="match status" value="1"/>
</dbReference>
<dbReference type="SMART" id="SM00355">
    <property type="entry name" value="ZnF_C2H2"/>
    <property type="match status" value="5"/>
</dbReference>
<dbReference type="PROSITE" id="PS00028">
    <property type="entry name" value="ZINC_FINGER_C2H2_1"/>
    <property type="match status" value="2"/>
</dbReference>
<dbReference type="PROSITE" id="PS50157">
    <property type="entry name" value="ZINC_FINGER_C2H2_2"/>
    <property type="match status" value="1"/>
</dbReference>
<keyword id="KW-0238">DNA-binding</keyword>
<keyword id="KW-0479">Metal-binding</keyword>
<keyword id="KW-0539">Nucleus</keyword>
<keyword id="KW-1185">Reference proteome</keyword>
<keyword id="KW-0677">Repeat</keyword>
<keyword id="KW-0862">Zinc</keyword>
<keyword id="KW-0863">Zinc-finger</keyword>
<name>ZTF1_CAEEL</name>
<feature type="chain" id="PRO_0000046897" description="Heterogeneous nuclear ribonucleoprotein C homolog">
    <location>
        <begin position="1"/>
        <end position="582"/>
    </location>
</feature>
<feature type="zinc finger region" description="C2H2-type 1" evidence="1">
    <location>
        <begin position="102"/>
        <end position="125"/>
    </location>
</feature>
<feature type="zinc finger region" description="C2H2-type 2" evidence="1">
    <location>
        <begin position="130"/>
        <end position="154"/>
    </location>
</feature>
<feature type="zinc finger region" description="C2H2-type 3" evidence="1">
    <location>
        <begin position="213"/>
        <end position="235"/>
    </location>
</feature>
<feature type="region of interest" description="Disordered" evidence="2">
    <location>
        <begin position="1"/>
        <end position="21"/>
    </location>
</feature>
<evidence type="ECO:0000255" key="1">
    <source>
        <dbReference type="PROSITE-ProRule" id="PRU00042"/>
    </source>
</evidence>
<evidence type="ECO:0000256" key="2">
    <source>
        <dbReference type="SAM" id="MobiDB-lite"/>
    </source>
</evidence>
<evidence type="ECO:0000305" key="3"/>
<evidence type="ECO:0000312" key="4">
    <source>
        <dbReference type="WormBase" id="F54F2.5"/>
    </source>
</evidence>
<sequence>MSEALETGDPSPPPPIVSENGKTYYYLNSQESQAPNTPSPQEVPPKKMTNLFESGPLVYEDVAADIEAVTERASRRHYENKMVVKNSREMFDNVNILPDGRYYCCLCNRPYKTHATLTAHLRGYHLRNESSCDEPGCNFLSFTDQEKKRHRRTHDKKKKERNSQESMVIHEKIQKAVRRLDYPGEDELRDHLNGSTEVQGTIRTMTKKGKIRYACLKCPHSVFNAYHAARHVEMHNDFPKNCFYCGEIRKGTVDLQVHYMRVHKHEGIRTFKCSVCHLRFTTTILFRDHVECENGCQNPEIRQDIYYGELPEGTIVDDLTQDRLQNFRKRQEIWKTMGQMVEEHRTDVHEEIVGESSVQAGDTTVFDGSRAFIQTPFGLKTALEVKNTSRFCPRSGKRTSDDDLMITNKKRERLEMAPNLHFHQDIIHRLPTSTTTQRQNNAFQNEYLRPPVSYGYDPLIGRYPDFQLMSQSSLPSSSASSSSYDPFATAVYQDSDRNPMQPNDQHICDMNNVGAYETANFGLDNSSDLVVNEATIASNLMVNEVEDEVFEELNKLDFVMPADDGNDNDDDLEEVFNFGNVA</sequence>
<gene>
    <name evidence="4" type="primary">hrpc-1</name>
    <name evidence="4" type="synonym">ztf-1</name>
    <name evidence="4" type="synonym">ztf-4</name>
    <name evidence="4" type="ORF">F54F2.5</name>
</gene>
<protein>
    <recommendedName>
        <fullName evidence="4">Heterogeneous nuclear ribonucleoprotein C homolog</fullName>
    </recommendedName>
    <alternativeName>
        <fullName evidence="3">Zinc finger transcription factor family protein 1</fullName>
    </alternativeName>
</protein>
<organism>
    <name type="scientific">Caenorhabditis elegans</name>
    <dbReference type="NCBI Taxonomy" id="6239"/>
    <lineage>
        <taxon>Eukaryota</taxon>
        <taxon>Metazoa</taxon>
        <taxon>Ecdysozoa</taxon>
        <taxon>Nematoda</taxon>
        <taxon>Chromadorea</taxon>
        <taxon>Rhabditida</taxon>
        <taxon>Rhabditina</taxon>
        <taxon>Rhabditomorpha</taxon>
        <taxon>Rhabditoidea</taxon>
        <taxon>Rhabditidae</taxon>
        <taxon>Peloderinae</taxon>
        <taxon>Caenorhabditis</taxon>
    </lineage>
</organism>
<proteinExistence type="predicted"/>
<reference key="1">
    <citation type="journal article" date="1994" name="Nature">
        <title>2.2 Mb of contiguous nucleotide sequence from chromosome III of C. elegans.</title>
        <authorList>
            <person name="Wilson R."/>
            <person name="Ainscough R."/>
            <person name="Anderson K."/>
            <person name="Baynes C."/>
            <person name="Berks M."/>
            <person name="Bonfield J."/>
            <person name="Burton J."/>
            <person name="Connell M."/>
            <person name="Copsey T."/>
            <person name="Cooper J."/>
            <person name="Coulson A."/>
            <person name="Craxton M."/>
            <person name="Dear S."/>
            <person name="Du Z."/>
            <person name="Durbin R."/>
            <person name="Favello A."/>
            <person name="Fraser A."/>
            <person name="Fulton L."/>
            <person name="Gardner A."/>
            <person name="Green P."/>
            <person name="Hawkins T."/>
            <person name="Hillier L."/>
            <person name="Jier M."/>
            <person name="Johnston L."/>
            <person name="Jones M."/>
            <person name="Kershaw J."/>
            <person name="Kirsten J."/>
            <person name="Laisster N."/>
            <person name="Latreille P."/>
            <person name="Lightning J."/>
            <person name="Lloyd C."/>
            <person name="Mortimore B."/>
            <person name="O'Callaghan M."/>
            <person name="Parsons J."/>
            <person name="Percy C."/>
            <person name="Rifken L."/>
            <person name="Roopra A."/>
            <person name="Saunders D."/>
            <person name="Shownkeen R."/>
            <person name="Sims M."/>
            <person name="Smaldon N."/>
            <person name="Smith A."/>
            <person name="Smith M."/>
            <person name="Sonnhammer E."/>
            <person name="Staden R."/>
            <person name="Sulston J."/>
            <person name="Thierry-Mieg J."/>
            <person name="Thomas K."/>
            <person name="Vaudin M."/>
            <person name="Vaughan K."/>
            <person name="Waterston R."/>
            <person name="Watson A."/>
            <person name="Weinstock L."/>
            <person name="Wilkinson-Sproat J."/>
            <person name="Wohldman P."/>
        </authorList>
    </citation>
    <scope>NUCLEOTIDE SEQUENCE [LARGE SCALE GENOMIC DNA]</scope>
    <source>
        <strain>Bristol N2</strain>
    </source>
</reference>
<reference key="2">
    <citation type="journal article" date="1998" name="Science">
        <title>Genome sequence of the nematode C. elegans: a platform for investigating biology.</title>
        <authorList>
            <consortium name="The C. elegans sequencing consortium"/>
        </authorList>
    </citation>
    <scope>NUCLEOTIDE SEQUENCE [LARGE SCALE GENOMIC DNA]</scope>
    <source>
        <strain>Bristol N2</strain>
    </source>
</reference>
<accession>P34450</accession>
<accession>Q8IG18</accession>
<comment type="subcellular location">
    <subcellularLocation>
        <location evidence="3">Nucleus</location>
    </subcellularLocation>
</comment>